<evidence type="ECO:0000255" key="1"/>
<evidence type="ECO:0000269" key="2">
    <source>
    </source>
</evidence>
<evidence type="ECO:0000305" key="3"/>
<organism>
    <name type="scientific">Arabidopsis thaliana</name>
    <name type="common">Mouse-ear cress</name>
    <dbReference type="NCBI Taxonomy" id="3702"/>
    <lineage>
        <taxon>Eukaryota</taxon>
        <taxon>Viridiplantae</taxon>
        <taxon>Streptophyta</taxon>
        <taxon>Embryophyta</taxon>
        <taxon>Tracheophyta</taxon>
        <taxon>Spermatophyta</taxon>
        <taxon>Magnoliopsida</taxon>
        <taxon>eudicotyledons</taxon>
        <taxon>Gunneridae</taxon>
        <taxon>Pentapetalae</taxon>
        <taxon>rosids</taxon>
        <taxon>malvids</taxon>
        <taxon>Brassicales</taxon>
        <taxon>Brassicaceae</taxon>
        <taxon>Camelineae</taxon>
        <taxon>Arabidopsis</taxon>
    </lineage>
</organism>
<protein>
    <recommendedName>
        <fullName>Gibberellin-regulated protein 3</fullName>
    </recommendedName>
    <alternativeName>
        <fullName>GAST1 protein homolog 3</fullName>
    </alternativeName>
</protein>
<keyword id="KW-1015">Disulfide bond</keyword>
<keyword id="KW-0939">Gibberellin signaling pathway</keyword>
<keyword id="KW-1185">Reference proteome</keyword>
<keyword id="KW-0964">Secreted</keyword>
<keyword id="KW-0732">Signal</keyword>
<gene>
    <name type="primary">GASA3</name>
    <name type="ordered locus">At4g09600</name>
    <name type="ORF">T25P22.40</name>
</gene>
<dbReference type="EMBL" id="U11764">
    <property type="protein sequence ID" value="AAB06308.1"/>
    <property type="molecule type" value="mRNA"/>
</dbReference>
<dbReference type="EMBL" id="AL161515">
    <property type="protein sequence ID" value="CAB78083.1"/>
    <property type="molecule type" value="Genomic_DNA"/>
</dbReference>
<dbReference type="EMBL" id="AL161831">
    <property type="protein sequence ID" value="CAB82127.1"/>
    <property type="molecule type" value="Genomic_DNA"/>
</dbReference>
<dbReference type="EMBL" id="CP002687">
    <property type="protein sequence ID" value="AEE82770.1"/>
    <property type="molecule type" value="Genomic_DNA"/>
</dbReference>
<dbReference type="EMBL" id="AY052302">
    <property type="protein sequence ID" value="AAK96495.1"/>
    <property type="molecule type" value="mRNA"/>
</dbReference>
<dbReference type="PIR" id="S60231">
    <property type="entry name" value="S60231"/>
</dbReference>
<dbReference type="RefSeq" id="NP_192698.1">
    <property type="nucleotide sequence ID" value="NM_117028.4"/>
</dbReference>
<dbReference type="SMR" id="P46687"/>
<dbReference type="FunCoup" id="P46687">
    <property type="interactions" value="51"/>
</dbReference>
<dbReference type="STRING" id="3702.P46687"/>
<dbReference type="PaxDb" id="3702-AT4G09600.1"/>
<dbReference type="ProteomicsDB" id="228901"/>
<dbReference type="EnsemblPlants" id="AT4G09600.1">
    <property type="protein sequence ID" value="AT4G09600.1"/>
    <property type="gene ID" value="AT4G09600"/>
</dbReference>
<dbReference type="GeneID" id="826545"/>
<dbReference type="Gramene" id="AT4G09600.1">
    <property type="protein sequence ID" value="AT4G09600.1"/>
    <property type="gene ID" value="AT4G09600"/>
</dbReference>
<dbReference type="KEGG" id="ath:AT4G09600"/>
<dbReference type="Araport" id="AT4G09600"/>
<dbReference type="TAIR" id="AT4G09600">
    <property type="gene designation" value="GASA3"/>
</dbReference>
<dbReference type="eggNOG" id="ENOG502SAJ5">
    <property type="taxonomic scope" value="Eukaryota"/>
</dbReference>
<dbReference type="HOGENOM" id="CLU_142643_5_1_1"/>
<dbReference type="InParanoid" id="P46687"/>
<dbReference type="OMA" id="AANKIDC"/>
<dbReference type="OrthoDB" id="625265at2759"/>
<dbReference type="PhylomeDB" id="P46687"/>
<dbReference type="PRO" id="PR:P46687"/>
<dbReference type="Proteomes" id="UP000006548">
    <property type="component" value="Chromosome 4"/>
</dbReference>
<dbReference type="ExpressionAtlas" id="P46687">
    <property type="expression patterns" value="baseline and differential"/>
</dbReference>
<dbReference type="GO" id="GO:0005576">
    <property type="term" value="C:extracellular region"/>
    <property type="evidence" value="ECO:0007669"/>
    <property type="project" value="UniProtKB-SubCell"/>
</dbReference>
<dbReference type="GO" id="GO:0009740">
    <property type="term" value="P:gibberellic acid mediated signaling pathway"/>
    <property type="evidence" value="ECO:0007669"/>
    <property type="project" value="UniProtKB-KW"/>
</dbReference>
<dbReference type="GO" id="GO:0009739">
    <property type="term" value="P:response to gibberellin"/>
    <property type="evidence" value="ECO:0000304"/>
    <property type="project" value="TAIR"/>
</dbReference>
<dbReference type="InterPro" id="IPR003854">
    <property type="entry name" value="GASA"/>
</dbReference>
<dbReference type="PANTHER" id="PTHR23201">
    <property type="entry name" value="EXTENSIN, PROLINE-RICH PROTEIN"/>
    <property type="match status" value="1"/>
</dbReference>
<dbReference type="PANTHER" id="PTHR23201:SF18">
    <property type="entry name" value="GIBBERELLIN-REGULATED PROTEIN 2-RELATED"/>
    <property type="match status" value="1"/>
</dbReference>
<dbReference type="Pfam" id="PF02704">
    <property type="entry name" value="GASA"/>
    <property type="match status" value="1"/>
</dbReference>
<name>GASA3_ARATH</name>
<comment type="function">
    <text>Gibberellin-regulated protein that may function in hormonal controlled steps of development such as seed germination, flowering and seed maturation.</text>
</comment>
<comment type="subcellular location">
    <subcellularLocation>
        <location>Secreted</location>
    </subcellularLocation>
</comment>
<comment type="tissue specificity">
    <text evidence="2">Expressed in siliques, dry seeds and vasculature of roots and rosette leaves.</text>
</comment>
<comment type="PTM">
    <text>Six disulfide bonds may be present.</text>
</comment>
<comment type="similarity">
    <text evidence="3">Belongs to the GASA family.</text>
</comment>
<reference key="1">
    <citation type="journal article" date="1995" name="Plant Mol. Biol.">
        <title>GASA, a gibberellin-regulated gene family from Arabidopsis thaliana related to the tomato GAST1 gene.</title>
        <authorList>
            <person name="Herzog M."/>
            <person name="Dorne A.-M."/>
            <person name="Grellet F."/>
        </authorList>
    </citation>
    <scope>NUCLEOTIDE SEQUENCE [MRNA]</scope>
    <source>
        <strain>cv. Columbia</strain>
        <tissue>Seed</tissue>
    </source>
</reference>
<reference key="2">
    <citation type="journal article" date="1999" name="Nature">
        <title>Sequence and analysis of chromosome 4 of the plant Arabidopsis thaliana.</title>
        <authorList>
            <person name="Mayer K.F.X."/>
            <person name="Schueller C."/>
            <person name="Wambutt R."/>
            <person name="Murphy G."/>
            <person name="Volckaert G."/>
            <person name="Pohl T."/>
            <person name="Duesterhoeft A."/>
            <person name="Stiekema W."/>
            <person name="Entian K.-D."/>
            <person name="Terryn N."/>
            <person name="Harris B."/>
            <person name="Ansorge W."/>
            <person name="Brandt P."/>
            <person name="Grivell L.A."/>
            <person name="Rieger M."/>
            <person name="Weichselgartner M."/>
            <person name="de Simone V."/>
            <person name="Obermaier B."/>
            <person name="Mache R."/>
            <person name="Mueller M."/>
            <person name="Kreis M."/>
            <person name="Delseny M."/>
            <person name="Puigdomenech P."/>
            <person name="Watson M."/>
            <person name="Schmidtheini T."/>
            <person name="Reichert B."/>
            <person name="Portetelle D."/>
            <person name="Perez-Alonso M."/>
            <person name="Boutry M."/>
            <person name="Bancroft I."/>
            <person name="Vos P."/>
            <person name="Hoheisel J."/>
            <person name="Zimmermann W."/>
            <person name="Wedler H."/>
            <person name="Ridley P."/>
            <person name="Langham S.-A."/>
            <person name="McCullagh B."/>
            <person name="Bilham L."/>
            <person name="Robben J."/>
            <person name="van der Schueren J."/>
            <person name="Grymonprez B."/>
            <person name="Chuang Y.-J."/>
            <person name="Vandenbussche F."/>
            <person name="Braeken M."/>
            <person name="Weltjens I."/>
            <person name="Voet M."/>
            <person name="Bastiaens I."/>
            <person name="Aert R."/>
            <person name="Defoor E."/>
            <person name="Weitzenegger T."/>
            <person name="Bothe G."/>
            <person name="Ramsperger U."/>
            <person name="Hilbert H."/>
            <person name="Braun M."/>
            <person name="Holzer E."/>
            <person name="Brandt A."/>
            <person name="Peters S."/>
            <person name="van Staveren M."/>
            <person name="Dirkse W."/>
            <person name="Mooijman P."/>
            <person name="Klein Lankhorst R."/>
            <person name="Rose M."/>
            <person name="Hauf J."/>
            <person name="Koetter P."/>
            <person name="Berneiser S."/>
            <person name="Hempel S."/>
            <person name="Feldpausch M."/>
            <person name="Lamberth S."/>
            <person name="Van den Daele H."/>
            <person name="De Keyser A."/>
            <person name="Buysshaert C."/>
            <person name="Gielen J."/>
            <person name="Villarroel R."/>
            <person name="De Clercq R."/>
            <person name="van Montagu M."/>
            <person name="Rogers J."/>
            <person name="Cronin A."/>
            <person name="Quail M.A."/>
            <person name="Bray-Allen S."/>
            <person name="Clark L."/>
            <person name="Doggett J."/>
            <person name="Hall S."/>
            <person name="Kay M."/>
            <person name="Lennard N."/>
            <person name="McLay K."/>
            <person name="Mayes R."/>
            <person name="Pettett A."/>
            <person name="Rajandream M.A."/>
            <person name="Lyne M."/>
            <person name="Benes V."/>
            <person name="Rechmann S."/>
            <person name="Borkova D."/>
            <person name="Bloecker H."/>
            <person name="Scharfe M."/>
            <person name="Grimm M."/>
            <person name="Loehnert T.-H."/>
            <person name="Dose S."/>
            <person name="de Haan M."/>
            <person name="Maarse A.C."/>
            <person name="Schaefer M."/>
            <person name="Mueller-Auer S."/>
            <person name="Gabel C."/>
            <person name="Fuchs M."/>
            <person name="Fartmann B."/>
            <person name="Granderath K."/>
            <person name="Dauner D."/>
            <person name="Herzl A."/>
            <person name="Neumann S."/>
            <person name="Argiriou A."/>
            <person name="Vitale D."/>
            <person name="Liguori R."/>
            <person name="Piravandi E."/>
            <person name="Massenet O."/>
            <person name="Quigley F."/>
            <person name="Clabauld G."/>
            <person name="Muendlein A."/>
            <person name="Felber R."/>
            <person name="Schnabl S."/>
            <person name="Hiller R."/>
            <person name="Schmidt W."/>
            <person name="Lecharny A."/>
            <person name="Aubourg S."/>
            <person name="Chefdor F."/>
            <person name="Cooke R."/>
            <person name="Berger C."/>
            <person name="Monfort A."/>
            <person name="Casacuberta E."/>
            <person name="Gibbons T."/>
            <person name="Weber N."/>
            <person name="Vandenbol M."/>
            <person name="Bargues M."/>
            <person name="Terol J."/>
            <person name="Torres A."/>
            <person name="Perez-Perez A."/>
            <person name="Purnelle B."/>
            <person name="Bent E."/>
            <person name="Johnson S."/>
            <person name="Tacon D."/>
            <person name="Jesse T."/>
            <person name="Heijnen L."/>
            <person name="Schwarz S."/>
            <person name="Scholler P."/>
            <person name="Heber S."/>
            <person name="Francs P."/>
            <person name="Bielke C."/>
            <person name="Frishman D."/>
            <person name="Haase D."/>
            <person name="Lemcke K."/>
            <person name="Mewes H.-W."/>
            <person name="Stocker S."/>
            <person name="Zaccaria P."/>
            <person name="Bevan M."/>
            <person name="Wilson R.K."/>
            <person name="de la Bastide M."/>
            <person name="Habermann K."/>
            <person name="Parnell L."/>
            <person name="Dedhia N."/>
            <person name="Gnoj L."/>
            <person name="Schutz K."/>
            <person name="Huang E."/>
            <person name="Spiegel L."/>
            <person name="Sekhon M."/>
            <person name="Murray J."/>
            <person name="Sheet P."/>
            <person name="Cordes M."/>
            <person name="Abu-Threideh J."/>
            <person name="Stoneking T."/>
            <person name="Kalicki J."/>
            <person name="Graves T."/>
            <person name="Harmon G."/>
            <person name="Edwards J."/>
            <person name="Latreille P."/>
            <person name="Courtney L."/>
            <person name="Cloud J."/>
            <person name="Abbott A."/>
            <person name="Scott K."/>
            <person name="Johnson D."/>
            <person name="Minx P."/>
            <person name="Bentley D."/>
            <person name="Fulton B."/>
            <person name="Miller N."/>
            <person name="Greco T."/>
            <person name="Kemp K."/>
            <person name="Kramer J."/>
            <person name="Fulton L."/>
            <person name="Mardis E."/>
            <person name="Dante M."/>
            <person name="Pepin K."/>
            <person name="Hillier L.W."/>
            <person name="Nelson J."/>
            <person name="Spieth J."/>
            <person name="Ryan E."/>
            <person name="Andrews S."/>
            <person name="Geisel C."/>
            <person name="Layman D."/>
            <person name="Du H."/>
            <person name="Ali J."/>
            <person name="Berghoff A."/>
            <person name="Jones K."/>
            <person name="Drone K."/>
            <person name="Cotton M."/>
            <person name="Joshu C."/>
            <person name="Antonoiu B."/>
            <person name="Zidanic M."/>
            <person name="Strong C."/>
            <person name="Sun H."/>
            <person name="Lamar B."/>
            <person name="Yordan C."/>
            <person name="Ma P."/>
            <person name="Zhong J."/>
            <person name="Preston R."/>
            <person name="Vil D."/>
            <person name="Shekher M."/>
            <person name="Matero A."/>
            <person name="Shah R."/>
            <person name="Swaby I.K."/>
            <person name="O'Shaughnessy A."/>
            <person name="Rodriguez M."/>
            <person name="Hoffman J."/>
            <person name="Till S."/>
            <person name="Granat S."/>
            <person name="Shohdy N."/>
            <person name="Hasegawa A."/>
            <person name="Hameed A."/>
            <person name="Lodhi M."/>
            <person name="Johnson A."/>
            <person name="Chen E."/>
            <person name="Marra M.A."/>
            <person name="Martienssen R."/>
            <person name="McCombie W.R."/>
        </authorList>
    </citation>
    <scope>NUCLEOTIDE SEQUENCE [LARGE SCALE GENOMIC DNA]</scope>
    <source>
        <strain>cv. Columbia</strain>
    </source>
</reference>
<reference key="3">
    <citation type="journal article" date="2017" name="Plant J.">
        <title>Araport11: a complete reannotation of the Arabidopsis thaliana reference genome.</title>
        <authorList>
            <person name="Cheng C.Y."/>
            <person name="Krishnakumar V."/>
            <person name="Chan A.P."/>
            <person name="Thibaud-Nissen F."/>
            <person name="Schobel S."/>
            <person name="Town C.D."/>
        </authorList>
    </citation>
    <scope>GENOME REANNOTATION</scope>
    <source>
        <strain>cv. Columbia</strain>
    </source>
</reference>
<reference key="4">
    <citation type="journal article" date="2003" name="Science">
        <title>Empirical analysis of transcriptional activity in the Arabidopsis genome.</title>
        <authorList>
            <person name="Yamada K."/>
            <person name="Lim J."/>
            <person name="Dale J.M."/>
            <person name="Chen H."/>
            <person name="Shinn P."/>
            <person name="Palm C.J."/>
            <person name="Southwick A.M."/>
            <person name="Wu H.C."/>
            <person name="Kim C.J."/>
            <person name="Nguyen M."/>
            <person name="Pham P.K."/>
            <person name="Cheuk R.F."/>
            <person name="Karlin-Newmann G."/>
            <person name="Liu S.X."/>
            <person name="Lam B."/>
            <person name="Sakano H."/>
            <person name="Wu T."/>
            <person name="Yu G."/>
            <person name="Miranda M."/>
            <person name="Quach H.L."/>
            <person name="Tripp M."/>
            <person name="Chang C.H."/>
            <person name="Lee J.M."/>
            <person name="Toriumi M.J."/>
            <person name="Chan M.M."/>
            <person name="Tang C.C."/>
            <person name="Onodera C.S."/>
            <person name="Deng J.M."/>
            <person name="Akiyama K."/>
            <person name="Ansari Y."/>
            <person name="Arakawa T."/>
            <person name="Banh J."/>
            <person name="Banno F."/>
            <person name="Bowser L."/>
            <person name="Brooks S.Y."/>
            <person name="Carninci P."/>
            <person name="Chao Q."/>
            <person name="Choy N."/>
            <person name="Enju A."/>
            <person name="Goldsmith A.D."/>
            <person name="Gurjal M."/>
            <person name="Hansen N.F."/>
            <person name="Hayashizaki Y."/>
            <person name="Johnson-Hopson C."/>
            <person name="Hsuan V.W."/>
            <person name="Iida K."/>
            <person name="Karnes M."/>
            <person name="Khan S."/>
            <person name="Koesema E."/>
            <person name="Ishida J."/>
            <person name="Jiang P.X."/>
            <person name="Jones T."/>
            <person name="Kawai J."/>
            <person name="Kamiya A."/>
            <person name="Meyers C."/>
            <person name="Nakajima M."/>
            <person name="Narusaka M."/>
            <person name="Seki M."/>
            <person name="Sakurai T."/>
            <person name="Satou M."/>
            <person name="Tamse R."/>
            <person name="Vaysberg M."/>
            <person name="Wallender E.K."/>
            <person name="Wong C."/>
            <person name="Yamamura Y."/>
            <person name="Yuan S."/>
            <person name="Shinozaki K."/>
            <person name="Davis R.W."/>
            <person name="Theologis A."/>
            <person name="Ecker J.R."/>
        </authorList>
    </citation>
    <scope>NUCLEOTIDE SEQUENCE [LARGE SCALE MRNA]</scope>
    <source>
        <strain>cv. Columbia</strain>
    </source>
</reference>
<reference key="5">
    <citation type="journal article" date="2007" name="Plant Cell Physiol.">
        <title>GASA4, one of the 14-member Arabidopsis GASA family of small polypeptides, regulates flowering and seed development.</title>
        <authorList>
            <person name="Roxrud I."/>
            <person name="Lid S.E."/>
            <person name="Fletcher J.C."/>
            <person name="Schmidt E.D."/>
            <person name="Opsahl-Sorteberg H.G."/>
        </authorList>
    </citation>
    <scope>TISSUE SPECIFICITY</scope>
</reference>
<feature type="signal peptide" evidence="1">
    <location>
        <begin position="1"/>
        <end position="26"/>
    </location>
</feature>
<feature type="chain" id="PRO_0000021324" description="Gibberellin-regulated protein 3">
    <location>
        <begin position="27"/>
        <end position="99"/>
    </location>
</feature>
<proteinExistence type="evidence at transcript level"/>
<accession>P46687</accession>
<sequence>MAIFRSTLVLLLILFCLTTFELHVHAAEDSQVGEGVVKIDCGGRCKGRCSKSSRPNLCLRACNSCCYRCNCVPPGTAGNHHLCPCYASITTRGGRLKCP</sequence>